<organism>
    <name type="scientific">Ostreid herpesvirus 1 (isolate France)</name>
    <name type="common">OsHV-1</name>
    <name type="synonym">Pacific oyster herpesvirus</name>
    <dbReference type="NCBI Taxonomy" id="654903"/>
    <lineage>
        <taxon>Viruses</taxon>
        <taxon>Duplodnaviria</taxon>
        <taxon>Heunggongvirae</taxon>
        <taxon>Peploviricota</taxon>
        <taxon>Herviviricetes</taxon>
        <taxon>Herpesvirales</taxon>
        <taxon>Malacoherpesviridae</taxon>
        <taxon>Ostreavirus</taxon>
        <taxon>Ostreavirus ostreidmalaco1</taxon>
        <taxon>Ostreid herpesvirus 1</taxon>
    </lineage>
</organism>
<feature type="chain" id="PRO_0000385109" description="Uncharacterized protein ORF89">
    <location>
        <begin position="1"/>
        <end position="244"/>
    </location>
</feature>
<dbReference type="EMBL" id="AY509253">
    <property type="protein sequence ID" value="AAS00975.2"/>
    <property type="molecule type" value="Genomic_DNA"/>
</dbReference>
<dbReference type="RefSeq" id="YP_024628.2">
    <property type="nucleotide sequence ID" value="NC_005881.2"/>
</dbReference>
<dbReference type="SMR" id="Q6R7E0"/>
<dbReference type="KEGG" id="vg:2948212"/>
<dbReference type="Proteomes" id="UP000007021">
    <property type="component" value="Segment"/>
</dbReference>
<name>Y089_OSHVF</name>
<protein>
    <recommendedName>
        <fullName>Uncharacterized protein ORF89</fullName>
    </recommendedName>
</protein>
<gene>
    <name type="ORF">ORF89</name>
</gene>
<proteinExistence type="predicted"/>
<organismHost>
    <name type="scientific">Magallana gigas</name>
    <name type="common">Pacific oyster</name>
    <name type="synonym">Crassostrea gigas</name>
    <dbReference type="NCBI Taxonomy" id="29159"/>
</organismHost>
<organismHost>
    <name type="scientific">Pecten maximus</name>
    <name type="common">King scallop</name>
    <name type="synonym">Pilgrim's clam</name>
    <dbReference type="NCBI Taxonomy" id="6579"/>
</organismHost>
<sequence>MFGWLKKLFDMILRIEMEFYTRQEECILSLSGYIDSVSDKKYKPESHAKRKQMWASMYGMQEWDDTEWGLLKDDIDNMYDGAENNLASILTFLQDMGYEKGYADMVLRNLCHNNWIKDETRAALVDIWLNHTMLDSGETINHMYGDIIPLNRESYVTEFRAKVLSGCLPINSSIDDLKDAVIDITTKKEKGKMINTILQVVGDKTHDQPIIPAANSASVVIDMPSPKKKRLHEKKLDKTALLAD</sequence>
<reference key="1">
    <citation type="journal article" date="2005" name="J. Gen. Virol.">
        <title>A novel class of herpesvirus with bivalve hosts.</title>
        <authorList>
            <person name="Davison A.J."/>
            <person name="Trus B.L."/>
            <person name="Cheng N."/>
            <person name="Steven A.C."/>
            <person name="Watson M.S."/>
            <person name="Cunningham C."/>
            <person name="Le Deuff R.M."/>
            <person name="Renault T."/>
        </authorList>
    </citation>
    <scope>NUCLEOTIDE SEQUENCE [LARGE SCALE GENOMIC DNA]</scope>
</reference>
<reference key="2">
    <citation type="submission" date="2013-08" db="EMBL/GenBank/DDBJ databases">
        <authorList>
            <person name="Davison A.J."/>
        </authorList>
    </citation>
    <scope>SEQUENCE REVISION TO 9</scope>
</reference>
<accession>Q6R7E0</accession>
<keyword id="KW-1185">Reference proteome</keyword>